<comment type="function">
    <text evidence="1">Cell division protein that is required for growth during stress conditions. May be involved in protecting or stabilizing the divisomal assembly under conditions of stress.</text>
</comment>
<comment type="subcellular location">
    <subcellularLocation>
        <location evidence="1">Periplasm</location>
    </subcellularLocation>
    <text evidence="1">Localizes to the division septum.</text>
</comment>
<comment type="PTM">
    <text>Predicted to be exported by the Tat system. The position of the signal peptide cleavage has not been experimentally proven.</text>
</comment>
<comment type="similarity">
    <text evidence="1">Belongs to the FtsP family.</text>
</comment>
<keyword id="KW-0131">Cell cycle</keyword>
<keyword id="KW-0132">Cell division</keyword>
<keyword id="KW-0574">Periplasm</keyword>
<keyword id="KW-1185">Reference proteome</keyword>
<keyword id="KW-0732">Signal</keyword>
<evidence type="ECO:0000255" key="1">
    <source>
        <dbReference type="HAMAP-Rule" id="MF_00915"/>
    </source>
</evidence>
<feature type="signal peptide" description="Tat-type signal" evidence="1">
    <location>
        <begin position="1"/>
        <end position="27"/>
    </location>
</feature>
<feature type="chain" id="PRO_0000416005" description="Cell division protein FtsP">
    <location>
        <begin position="28"/>
        <end position="472"/>
    </location>
</feature>
<dbReference type="EMBL" id="CP002038">
    <property type="protein sequence ID" value="ADM96574.1"/>
    <property type="molecule type" value="Genomic_DNA"/>
</dbReference>
<dbReference type="RefSeq" id="WP_013316057.1">
    <property type="nucleotide sequence ID" value="NC_014500.1"/>
</dbReference>
<dbReference type="SMR" id="E0SI60"/>
<dbReference type="STRING" id="198628.Dda3937_01256"/>
<dbReference type="KEGG" id="ddd:Dda3937_01256"/>
<dbReference type="PATRIC" id="fig|198628.6.peg.373"/>
<dbReference type="eggNOG" id="COG2132">
    <property type="taxonomic scope" value="Bacteria"/>
</dbReference>
<dbReference type="HOGENOM" id="CLU_009100_2_4_6"/>
<dbReference type="OrthoDB" id="9757546at2"/>
<dbReference type="Proteomes" id="UP000006859">
    <property type="component" value="Chromosome"/>
</dbReference>
<dbReference type="GO" id="GO:0032153">
    <property type="term" value="C:cell division site"/>
    <property type="evidence" value="ECO:0007669"/>
    <property type="project" value="UniProtKB-UniRule"/>
</dbReference>
<dbReference type="GO" id="GO:0030288">
    <property type="term" value="C:outer membrane-bounded periplasmic space"/>
    <property type="evidence" value="ECO:0007669"/>
    <property type="project" value="UniProtKB-UniRule"/>
</dbReference>
<dbReference type="GO" id="GO:0005507">
    <property type="term" value="F:copper ion binding"/>
    <property type="evidence" value="ECO:0007669"/>
    <property type="project" value="InterPro"/>
</dbReference>
<dbReference type="GO" id="GO:0016491">
    <property type="term" value="F:oxidoreductase activity"/>
    <property type="evidence" value="ECO:0007669"/>
    <property type="project" value="InterPro"/>
</dbReference>
<dbReference type="GO" id="GO:0043093">
    <property type="term" value="P:FtsZ-dependent cytokinesis"/>
    <property type="evidence" value="ECO:0007669"/>
    <property type="project" value="UniProtKB-UniRule"/>
</dbReference>
<dbReference type="CDD" id="cd13867">
    <property type="entry name" value="CuRO_2_CueO_FtsP"/>
    <property type="match status" value="1"/>
</dbReference>
<dbReference type="Gene3D" id="2.60.40.420">
    <property type="entry name" value="Cupredoxins - blue copper proteins"/>
    <property type="match status" value="3"/>
</dbReference>
<dbReference type="HAMAP" id="MF_00915">
    <property type="entry name" value="FtsP"/>
    <property type="match status" value="1"/>
</dbReference>
<dbReference type="InterPro" id="IPR011707">
    <property type="entry name" value="Cu-oxidase-like_N"/>
</dbReference>
<dbReference type="InterPro" id="IPR011706">
    <property type="entry name" value="Cu-oxidase_C"/>
</dbReference>
<dbReference type="InterPro" id="IPR045087">
    <property type="entry name" value="Cu-oxidase_fam"/>
</dbReference>
<dbReference type="InterPro" id="IPR008972">
    <property type="entry name" value="Cupredoxin"/>
</dbReference>
<dbReference type="InterPro" id="IPR026589">
    <property type="entry name" value="FtsP"/>
</dbReference>
<dbReference type="InterPro" id="IPR006311">
    <property type="entry name" value="TAT_signal"/>
</dbReference>
<dbReference type="NCBIfam" id="NF008135">
    <property type="entry name" value="PRK10883.1"/>
    <property type="match status" value="1"/>
</dbReference>
<dbReference type="PANTHER" id="PTHR48267:SF1">
    <property type="entry name" value="BILIRUBIN OXIDASE"/>
    <property type="match status" value="1"/>
</dbReference>
<dbReference type="PANTHER" id="PTHR48267">
    <property type="entry name" value="CUPREDOXIN SUPERFAMILY PROTEIN"/>
    <property type="match status" value="1"/>
</dbReference>
<dbReference type="Pfam" id="PF07731">
    <property type="entry name" value="Cu-oxidase_2"/>
    <property type="match status" value="1"/>
</dbReference>
<dbReference type="Pfam" id="PF07732">
    <property type="entry name" value="Cu-oxidase_3"/>
    <property type="match status" value="1"/>
</dbReference>
<dbReference type="SUPFAM" id="SSF49503">
    <property type="entry name" value="Cupredoxins"/>
    <property type="match status" value="3"/>
</dbReference>
<dbReference type="PROSITE" id="PS51318">
    <property type="entry name" value="TAT"/>
    <property type="match status" value="1"/>
</dbReference>
<reference key="1">
    <citation type="journal article" date="2011" name="J. Bacteriol.">
        <title>Genome sequence of the plant-pathogenic bacterium Dickeya dadantii 3937.</title>
        <authorList>
            <person name="Glasner J.D."/>
            <person name="Yang C.H."/>
            <person name="Reverchon S."/>
            <person name="Hugouvieux-Cotte-Pattat N."/>
            <person name="Condemine G."/>
            <person name="Bohin J.P."/>
            <person name="Van Gijsegem F."/>
            <person name="Yang S."/>
            <person name="Franza T."/>
            <person name="Expert D."/>
            <person name="Plunkett G. III"/>
            <person name="San Francisco M.J."/>
            <person name="Charkowski A.O."/>
            <person name="Py B."/>
            <person name="Bell K."/>
            <person name="Rauscher L."/>
            <person name="Rodriguez-Palenzuela P."/>
            <person name="Toussaint A."/>
            <person name="Holeva M.C."/>
            <person name="He S.Y."/>
            <person name="Douet V."/>
            <person name="Boccara M."/>
            <person name="Blanco C."/>
            <person name="Toth I."/>
            <person name="Anderson B.D."/>
            <person name="Biehl B.S."/>
            <person name="Mau B."/>
            <person name="Flynn S.M."/>
            <person name="Barras F."/>
            <person name="Lindeberg M."/>
            <person name="Birch P.R."/>
            <person name="Tsuyumu S."/>
            <person name="Shi X."/>
            <person name="Hibbing M."/>
            <person name="Yap M.N."/>
            <person name="Carpentier M."/>
            <person name="Dassa E."/>
            <person name="Umehara M."/>
            <person name="Kim J.F."/>
            <person name="Rusch M."/>
            <person name="Soni P."/>
            <person name="Mayhew G.F."/>
            <person name="Fouts D.E."/>
            <person name="Gill S.R."/>
            <person name="Blattner F.R."/>
            <person name="Keen N.T."/>
            <person name="Perna N.T."/>
        </authorList>
    </citation>
    <scope>NUCLEOTIDE SEQUENCE [LARGE SCALE GENOMIC DNA]</scope>
    <source>
        <strain>3937</strain>
    </source>
</reference>
<organism>
    <name type="scientific">Dickeya dadantii (strain 3937)</name>
    <name type="common">Erwinia chrysanthemi (strain 3937)</name>
    <dbReference type="NCBI Taxonomy" id="198628"/>
    <lineage>
        <taxon>Bacteria</taxon>
        <taxon>Pseudomonadati</taxon>
        <taxon>Pseudomonadota</taxon>
        <taxon>Gammaproteobacteria</taxon>
        <taxon>Enterobacterales</taxon>
        <taxon>Pectobacteriaceae</taxon>
        <taxon>Dickeya</taxon>
    </lineage>
</organism>
<sequence>MSLSRRQFIQASGIALCAGAMPLTARADGGKNPLPVPPLLESRRGQPVFLTMQRAHWSFSGERKNPVWGFNGRYLGPTVRVFSNDDVKLIYSNRLNEPVSMTVSGLQVPGSLMGGAGRMIQPNMDWSPVLPVRQAAATCWYHANTPNRMAPHVYNGLAGLWLVEDSLSKSLPIPNHYGVDDFPLIIQDKRLDNFGAPLYNPPSSGGFMGDTLLVNGARNPYVEVSRGWVRLRLLNASNARRYVMRMSDGRPLHLIANDQGFLPAPMALNQMSLAPGERREVLVDMSQGNEATLTAGESASIMQRLRGLFEPSNILVSSAILTLRPTGLLPLVTNTLPMRLLADNIIDGAVSRTREFRLGDSLPGINGAMWDVNRVDVQTQVGRYERWIVHADQPQPFHVQGAAFLVRSVNGGLTPPEDSGWKDTVWVENDVELLVYFGQFSTPQFPFLYYSHTLEMADRGSIAQLVAQASNG</sequence>
<accession>E0SI60</accession>
<gene>
    <name evidence="1" type="primary">ftsP</name>
    <name type="ordered locus">Dda3937_01256</name>
</gene>
<proteinExistence type="inferred from homology"/>
<name>FTSP_DICD3</name>
<protein>
    <recommendedName>
        <fullName evidence="1">Cell division protein FtsP</fullName>
    </recommendedName>
</protein>